<reference key="1">
    <citation type="journal article" date="1991" name="J. Gen. Virol.">
        <title>Molecular evidence for a role of domestic ducks in the introduction of avian H3 influenza viruses to pigs in southern China, where the A/Hong Kong/68 (H3N2) strain emerged.</title>
        <authorList>
            <person name="Yasuda J."/>
            <person name="Shortridge K.F."/>
            <person name="Shimizu Y."/>
            <person name="Kida H."/>
        </authorList>
    </citation>
    <scope>NUCLEOTIDE SEQUENCE [GENOMIC RNA]</scope>
</reference>
<gene>
    <name evidence="1" type="primary">HA</name>
</gene>
<organismHost>
    <name type="scientific">Aves</name>
    <dbReference type="NCBI Taxonomy" id="8782"/>
</organismHost>
<feature type="chain" id="PRO_0000038934" description="Hemagglutinin HA1 chain">
    <location>
        <begin position="1"/>
        <end position="328"/>
    </location>
</feature>
<feature type="chain" id="PRO_0000038935" description="Hemagglutinin HA2 chain" evidence="1">
    <location>
        <begin position="330"/>
        <end position="550"/>
    </location>
</feature>
<feature type="topological domain" description="Extracellular" evidence="1">
    <location>
        <begin position="1"/>
        <end position="514"/>
    </location>
</feature>
<feature type="transmembrane region" description="Helical" evidence="1">
    <location>
        <begin position="515"/>
        <end position="535"/>
    </location>
</feature>
<feature type="topological domain" description="Cytoplasmic" evidence="1">
    <location>
        <begin position="536"/>
        <end position="550"/>
    </location>
</feature>
<feature type="site" description="Cleavage; by host" evidence="1">
    <location>
        <begin position="329"/>
        <end position="330"/>
    </location>
</feature>
<feature type="lipid moiety-binding region" description="S-palmitoyl cysteine; by host" evidence="1">
    <location>
        <position position="539"/>
    </location>
</feature>
<feature type="lipid moiety-binding region" description="S-palmitoyl cysteine; by host" evidence="1">
    <location>
        <position position="546"/>
    </location>
</feature>
<feature type="lipid moiety-binding region" description="S-palmitoyl cysteine; by host" evidence="1">
    <location>
        <position position="549"/>
    </location>
</feature>
<feature type="glycosylation site" description="N-linked (GlcNAc...) asparagine; by host" evidence="1">
    <location>
        <position position="22"/>
    </location>
</feature>
<feature type="glycosylation site" description="N-linked (GlcNAc...) asparagine; by host" evidence="1">
    <location>
        <position position="38"/>
    </location>
</feature>
<feature type="glycosylation site" description="N-linked (GlcNAc...) asparagine; by host" evidence="1">
    <location>
        <position position="165"/>
    </location>
</feature>
<feature type="glycosylation site" description="N-linked (GlcNAc...) asparagine; by host" evidence="1">
    <location>
        <position position="285"/>
    </location>
</feature>
<feature type="glycosylation site" description="N-linked (GlcNAc...) asparagine; by host" evidence="1">
    <location>
        <position position="483"/>
    </location>
</feature>
<feature type="disulfide bond" description="Interchain (between HA1 and HA2 chains)" evidence="1">
    <location>
        <begin position="14"/>
        <end position="466"/>
    </location>
</feature>
<feature type="disulfide bond" evidence="1">
    <location>
        <begin position="52"/>
        <end position="277"/>
    </location>
</feature>
<feature type="disulfide bond" evidence="1">
    <location>
        <begin position="64"/>
        <end position="76"/>
    </location>
</feature>
<feature type="disulfide bond" evidence="1">
    <location>
        <begin position="97"/>
        <end position="139"/>
    </location>
</feature>
<feature type="disulfide bond" evidence="1">
    <location>
        <begin position="281"/>
        <end position="305"/>
    </location>
</feature>
<feature type="disulfide bond" evidence="1">
    <location>
        <begin position="473"/>
        <end position="477"/>
    </location>
</feature>
<feature type="non-terminal residue">
    <location>
        <position position="1"/>
    </location>
</feature>
<protein>
    <recommendedName>
        <fullName evidence="1">Hemagglutinin</fullName>
    </recommendedName>
    <component>
        <recommendedName>
            <fullName evidence="1">Hemagglutinin HA1 chain</fullName>
        </recommendedName>
    </component>
    <component>
        <recommendedName>
            <fullName evidence="1">Hemagglutinin HA2 chain</fullName>
        </recommendedName>
    </component>
</protein>
<organism>
    <name type="scientific">Influenza A virus (strain A/Duck/Hong Kong/231/1977 H3)</name>
    <dbReference type="NCBI Taxonomy" id="45411"/>
    <lineage>
        <taxon>Viruses</taxon>
        <taxon>Riboviria</taxon>
        <taxon>Orthornavirae</taxon>
        <taxon>Negarnaviricota</taxon>
        <taxon>Polyploviricotina</taxon>
        <taxon>Insthoviricetes</taxon>
        <taxon>Articulavirales</taxon>
        <taxon>Orthomyxoviridae</taxon>
        <taxon>Alphainfluenzavirus</taxon>
        <taxon>Alphainfluenzavirus influenzae</taxon>
        <taxon>Influenza A virus</taxon>
    </lineage>
</organism>
<dbReference type="EMBL" id="D00932">
    <property type="protein sequence ID" value="BAA00772.1"/>
    <property type="molecule type" value="Genomic_RNA"/>
</dbReference>
<dbReference type="SMR" id="P43259"/>
<dbReference type="GlyCosmos" id="P43259">
    <property type="glycosylation" value="5 sites, No reported glycans"/>
</dbReference>
<dbReference type="GO" id="GO:0020002">
    <property type="term" value="C:host cell plasma membrane"/>
    <property type="evidence" value="ECO:0007669"/>
    <property type="project" value="UniProtKB-SubCell"/>
</dbReference>
<dbReference type="GO" id="GO:0016020">
    <property type="term" value="C:membrane"/>
    <property type="evidence" value="ECO:0007669"/>
    <property type="project" value="UniProtKB-KW"/>
</dbReference>
<dbReference type="GO" id="GO:0019031">
    <property type="term" value="C:viral envelope"/>
    <property type="evidence" value="ECO:0007669"/>
    <property type="project" value="UniProtKB-KW"/>
</dbReference>
<dbReference type="GO" id="GO:0055036">
    <property type="term" value="C:virion membrane"/>
    <property type="evidence" value="ECO:0007669"/>
    <property type="project" value="UniProtKB-SubCell"/>
</dbReference>
<dbReference type="GO" id="GO:0046789">
    <property type="term" value="F:host cell surface receptor binding"/>
    <property type="evidence" value="ECO:0007669"/>
    <property type="project" value="InterPro"/>
</dbReference>
<dbReference type="GO" id="GO:0075512">
    <property type="term" value="P:clathrin-dependent endocytosis of virus by host cell"/>
    <property type="evidence" value="ECO:0007669"/>
    <property type="project" value="UniProtKB-KW"/>
</dbReference>
<dbReference type="GO" id="GO:0039654">
    <property type="term" value="P:fusion of virus membrane with host endosome membrane"/>
    <property type="evidence" value="ECO:0007669"/>
    <property type="project" value="UniProtKB-KW"/>
</dbReference>
<dbReference type="GO" id="GO:0019064">
    <property type="term" value="P:fusion of virus membrane with host plasma membrane"/>
    <property type="evidence" value="ECO:0007669"/>
    <property type="project" value="InterPro"/>
</dbReference>
<dbReference type="GO" id="GO:0019062">
    <property type="term" value="P:virion attachment to host cell"/>
    <property type="evidence" value="ECO:0007669"/>
    <property type="project" value="UniProtKB-KW"/>
</dbReference>
<dbReference type="FunFam" id="3.90.20.10:FF:000001">
    <property type="entry name" value="Hemagglutinin"/>
    <property type="match status" value="1"/>
</dbReference>
<dbReference type="FunFam" id="3.90.209.20:FF:000001">
    <property type="entry name" value="Hemagglutinin"/>
    <property type="match status" value="1"/>
</dbReference>
<dbReference type="Gene3D" id="3.90.20.10">
    <property type="match status" value="1"/>
</dbReference>
<dbReference type="Gene3D" id="3.90.209.20">
    <property type="match status" value="1"/>
</dbReference>
<dbReference type="HAMAP" id="MF_04072">
    <property type="entry name" value="INFV_HEMA"/>
    <property type="match status" value="1"/>
</dbReference>
<dbReference type="InterPro" id="IPR008980">
    <property type="entry name" value="Capsid_hemagglutn"/>
</dbReference>
<dbReference type="InterPro" id="IPR013828">
    <property type="entry name" value="Hemagglutn_HA1_a/b_dom_sf"/>
</dbReference>
<dbReference type="InterPro" id="IPR000149">
    <property type="entry name" value="Hemagglutn_influenz_A"/>
</dbReference>
<dbReference type="InterPro" id="IPR001364">
    <property type="entry name" value="Hemagglutn_influenz_A/B"/>
</dbReference>
<dbReference type="Pfam" id="PF00509">
    <property type="entry name" value="Hemagglutinin"/>
    <property type="match status" value="1"/>
</dbReference>
<dbReference type="PRINTS" id="PR00330">
    <property type="entry name" value="HEMAGGLUTN1"/>
</dbReference>
<dbReference type="PRINTS" id="PR00329">
    <property type="entry name" value="HEMAGGLUTN12"/>
</dbReference>
<dbReference type="SUPFAM" id="SSF58064">
    <property type="entry name" value="Influenza hemagglutinin (stalk)"/>
    <property type="match status" value="1"/>
</dbReference>
<dbReference type="SUPFAM" id="SSF49818">
    <property type="entry name" value="Viral protein domain"/>
    <property type="match status" value="1"/>
</dbReference>
<evidence type="ECO:0000255" key="1">
    <source>
        <dbReference type="HAMAP-Rule" id="MF_04072"/>
    </source>
</evidence>
<name>HEMA_I77A7</name>
<proteinExistence type="inferred from homology"/>
<sequence length="550" mass="61763">QDLPGNDDSTATLCLGHHAVTNGTIVKTITDDQIEVTNATELVQSSSTGKICNNPHRILDGRDCTLIDALLGDPHCDVFQDETWDLFVERSNAYSNCYPYDVPDYASLRSLVASSGTLEFITEGFTWTGVTQNGGSNACKRGPANGFFSRLNWLTKSGSTYPVLNVTMPNNDNFDKLYIWGIHHPSTSQEQTTLYVQASGRVIVSTRRSQQTIISNIGSRPWVRGQSGRISIYWTIVKSGDVLVINSNGNLIAPRGYFKMRTGKSSIMRSDAPIDTCISECITPNGSIPNDKPFQNVNKITYGACPKYVKQNTLKLATGMRNVPEKQTRGLFGAIAGFIENGWEGMIDVWYGFRHQNSEGTGQAADLKSTQAAIDQINGKLNRVIEKTNEKFHQIEKEFSEVEGRIQDLEKYVEDTKIDLWSYNADVLVALENQHTIDLTDSEMNKLFEKTRRQLRENAEDMGNGCFKIYHKCDNTCIESIRNGTYDHDVYRDEALNNRFQIKGVELKSGYKDWILWISFAISCFLLCVVLLGFIMWACQRGNIRCNICI</sequence>
<accession>P43259</accession>
<comment type="function">
    <text evidence="1">Binds to sialic acid-containing receptors on the cell surface, bringing about the attachment of the virus particle to the cell. This attachment induces virion internalization either through clathrin-dependent endocytosis or through clathrin- and caveolin-independent pathway. Plays a major role in the determination of host range restriction and virulence. Class I viral fusion protein. Responsible for penetration of the virus into the cell cytoplasm by mediating the fusion of the membrane of the endocytosed virus particle with the endosomal membrane. Low pH in endosomes induces an irreversible conformational change in HA2, releasing the fusion hydrophobic peptide. Several trimers are required to form a competent fusion pore.</text>
</comment>
<comment type="subunit">
    <text evidence="1">Homotrimer of disulfide-linked HA1-HA2.</text>
</comment>
<comment type="subcellular location">
    <subcellularLocation>
        <location evidence="1">Virion membrane</location>
        <topology evidence="1">Single-pass type I membrane protein</topology>
    </subcellularLocation>
    <subcellularLocation>
        <location evidence="1">Host apical cell membrane</location>
        <topology evidence="1">Single-pass type I membrane protein</topology>
    </subcellularLocation>
    <text evidence="1">Targeted to the apical plasma membrane in epithelial polarized cells through a signal present in the transmembrane domain. Associated with glycosphingolipid- and cholesterol-enriched detergent-resistant lipid rafts.</text>
</comment>
<comment type="PTM">
    <text evidence="1">Palmitoylated.</text>
</comment>
<comment type="PTM">
    <text evidence="1">In natural infection, inactive HA is matured into HA1 and HA2 outside the cell by one or more trypsin-like, arginine-specific endoprotease secreted by the bronchial epithelial cells. One identified protease that may be involved in this process is secreted in lungs by club cells.</text>
</comment>
<comment type="miscellaneous">
    <text>Major glycoprotein, comprises over 80% of the envelope proteins present in virus particle.</text>
</comment>
<comment type="miscellaneous">
    <text>The extent of infection into host organism is determined by HA. Influenza viruses bud from the apical surface of polarized epithelial cells (e.g. bronchial epithelial cells) into lumen of lungs and are therefore usually pneumotropic. The reason is that HA is cleaved by tryptase clara which is restricted to lungs. However, HAs of H5 and H7 pantropic avian viruses subtypes can be cleaved by furin and subtilisin-type enzymes, allowing the virus to grow in other organs than lungs.</text>
</comment>
<comment type="miscellaneous">
    <text>The influenza A genome consist of 8 RNA segments. Genetic variation of hemagglutinin and/or neuraminidase genes results in the emergence of new influenza strains. The mechanism of variation can be the result of point mutations or the result of genetic reassortment between segments of two different strains.</text>
</comment>
<comment type="similarity">
    <text evidence="1">Belongs to the influenza viruses hemagglutinin family.</text>
</comment>
<keyword id="KW-1167">Clathrin- and caveolin-independent endocytosis of virus by host</keyword>
<keyword id="KW-1165">Clathrin-mediated endocytosis of virus by host</keyword>
<keyword id="KW-1015">Disulfide bond</keyword>
<keyword id="KW-1170">Fusion of virus membrane with host endosomal membrane</keyword>
<keyword id="KW-1168">Fusion of virus membrane with host membrane</keyword>
<keyword id="KW-0325">Glycoprotein</keyword>
<keyword id="KW-0348">Hemagglutinin</keyword>
<keyword id="KW-1032">Host cell membrane</keyword>
<keyword id="KW-1043">Host membrane</keyword>
<keyword id="KW-0945">Host-virus interaction</keyword>
<keyword id="KW-0449">Lipoprotein</keyword>
<keyword id="KW-0472">Membrane</keyword>
<keyword id="KW-0564">Palmitate</keyword>
<keyword id="KW-0812">Transmembrane</keyword>
<keyword id="KW-1133">Transmembrane helix</keyword>
<keyword id="KW-1161">Viral attachment to host cell</keyword>
<keyword id="KW-0261">Viral envelope protein</keyword>
<keyword id="KW-1162">Viral penetration into host cytoplasm</keyword>
<keyword id="KW-0946">Virion</keyword>
<keyword id="KW-1164">Virus endocytosis by host</keyword>
<keyword id="KW-1160">Virus entry into host cell</keyword>